<feature type="chain" id="PRO_0000414740" description="Cytochrome b mRNA maturase bI3">
    <location>
        <begin position="1"/>
        <end position="477"/>
    </location>
</feature>
<feature type="transmembrane region" description="Helical" evidence="2">
    <location>
        <begin position="32"/>
        <end position="52"/>
    </location>
</feature>
<feature type="transmembrane region" description="Helical" evidence="2">
    <location>
        <begin position="86"/>
        <end position="106"/>
    </location>
</feature>
<feature type="transmembrane region" description="Helical" evidence="2">
    <location>
        <begin position="113"/>
        <end position="133"/>
    </location>
</feature>
<feature type="transmembrane region" description="Helical" evidence="2">
    <location>
        <begin position="142"/>
        <end position="162"/>
    </location>
</feature>
<feature type="transmembrane region" description="Helical" evidence="2">
    <location>
        <begin position="166"/>
        <end position="186"/>
    </location>
</feature>
<feature type="region of interest" description="Cytochrome b">
    <location>
        <begin position="1"/>
        <end position="163"/>
    </location>
</feature>
<feature type="region of interest" description="Maturase">
    <location>
        <begin position="164"/>
        <end position="477"/>
    </location>
</feature>
<feature type="sequence conflict" description="In Ref. 1; AAA31960." evidence="3" ref="1">
    <original>I</original>
    <variation>T</variation>
    <location>
        <position position="176"/>
    </location>
</feature>
<feature type="sequence conflict" description="In Ref. 1; AAA31960." evidence="3" ref="1">
    <original>T</original>
    <variation>M</variation>
    <location>
        <position position="201"/>
    </location>
</feature>
<feature type="sequence conflict" description="In Ref. 1; AAA31960." evidence="3" ref="1">
    <original>E</original>
    <variation>EYIHSILE</variation>
    <location>
        <position position="272"/>
    </location>
</feature>
<feature type="sequence conflict" description="In Ref. 1; AAA31960." evidence="3" ref="1">
    <location>
        <begin position="307"/>
        <end position="319"/>
    </location>
</feature>
<feature type="sequence conflict" description="In Ref. 1; AAA31960." evidence="3" ref="1">
    <original>M</original>
    <variation>I</variation>
    <location>
        <position position="331"/>
    </location>
</feature>
<feature type="sequence conflict" description="In Ref. 1; AAA31960." evidence="3" ref="1">
    <original>D</original>
    <variation>N</variation>
    <location>
        <position position="337"/>
    </location>
</feature>
<feature type="sequence conflict" description="In Ref. 1; AAA31960." evidence="3" ref="1">
    <original>M</original>
    <variation>I</variation>
    <location>
        <position position="340"/>
    </location>
</feature>
<feature type="sequence conflict" description="In Ref. 1; AAA31960." evidence="3" ref="1">
    <original>TPAV</original>
    <variation>APTI</variation>
    <location>
        <begin position="348"/>
        <end position="351"/>
    </location>
</feature>
<feature type="sequence conflict" description="In Ref. 1; AAA31960." evidence="3" ref="1">
    <original>T</original>
    <variation>A</variation>
    <location>
        <position position="362"/>
    </location>
</feature>
<feature type="sequence conflict" description="In Ref. 1; AAA31960." evidence="3" ref="1">
    <original>CSE</original>
    <variation>YSK</variation>
    <location>
        <begin position="376"/>
        <end position="378"/>
    </location>
</feature>
<feature type="sequence conflict" description="In Ref. 1; AAA31960." evidence="3" ref="1">
    <original>DGC</original>
    <variation>NSY</variation>
    <location>
        <begin position="388"/>
        <end position="390"/>
    </location>
</feature>
<feature type="sequence conflict" description="In Ref. 1; AAA31960." evidence="3" ref="1">
    <original>M</original>
    <variation>I</variation>
    <location>
        <position position="408"/>
    </location>
</feature>
<feature type="sequence conflict" description="In Ref. 1; AAA31960." evidence="3" ref="1">
    <original>GV</original>
    <variation>SI</variation>
    <location>
        <begin position="425"/>
        <end position="426"/>
    </location>
</feature>
<feature type="sequence conflict" description="In Ref. 1; AAA31960." evidence="3" ref="1">
    <original>D</original>
    <variation>N</variation>
    <location>
        <position position="431"/>
    </location>
</feature>
<feature type="sequence conflict" description="In Ref. 1; AAA31960." evidence="3" ref="1">
    <original>A</original>
    <variation>V</variation>
    <location>
        <position position="476"/>
    </location>
</feature>
<protein>
    <recommendedName>
        <fullName>Cytochrome b mRNA maturase bI3</fullName>
    </recommendedName>
</protein>
<accession>P0CY43</accession>
<accession>M1QL64</accession>
<accession>P00162</accession>
<accession>Q35132</accession>
<sequence length="477" mass="54555">MRLLKSHPLLKLVNSYLIDASQPSNISYLWNFGSLLACCLIIQIVTGVTLAMHYSPNVLEAFNSIEHIMRDVNNGWLVRYLHSNTASAFFFLVYLHIGRGMYYGSYRAPRTLVWAIGTVILILMMATAFLGYVLPYGQMSLWGATVITNLISAIPWIGQDIVESKIITLIINLSFIAILFSIVVVYYYILLHVNFSSNLPTIGVIHQNALKKSNKALRLDKQEYISIPSSFLAFLAGLVDGDGYIQVTKTSKGFIAIKLVISLHLEDLSILEYIHSVLKIGKINIYKDLRSPTCKLVINKTDLQEILFPLLMYNKIFFLTNTRADQFNLAMYIFKNDIKMYNQIPDNTPAVFEIPKNPIDYTLLPFFKNWIVGFTCSEGSFFIKSNNDGCFQLKQRIHTNLFEAFKLMFNTNRKIDTTNNFNQFGVSSKSDIQKVINFFSFSGLHPLVGLKYIQYIKWLNNLRESLRYSTLNYPDAK</sequence>
<proteinExistence type="inferred from homology"/>
<name>MBI3_NEUCR</name>
<reference key="1">
    <citation type="journal article" date="1983" name="EMBO J.">
        <title>Nucleotide sequence and intron structure of the apocytochrome b gene of Neurospora crassa mitochondria.</title>
        <authorList>
            <person name="Helmer-Citterich M."/>
            <person name="Morelli G."/>
            <person name="Macino G."/>
        </authorList>
    </citation>
    <scope>NUCLEOTIDE SEQUENCE [GENOMIC DNA]</scope>
    <source>
        <strain>ATCC 24698 / 74-OR23-1A / CBS 708.71 / DSM 1257 / FGSC 987</strain>
    </source>
</reference>
<reference key="2">
    <citation type="journal article" date="2003" name="Nature">
        <title>The genome sequence of the filamentous fungus Neurospora crassa.</title>
        <authorList>
            <person name="Galagan J.E."/>
            <person name="Calvo S.E."/>
            <person name="Borkovich K.A."/>
            <person name="Selker E.U."/>
            <person name="Read N.D."/>
            <person name="Jaffe D.B."/>
            <person name="FitzHugh W."/>
            <person name="Ma L.-J."/>
            <person name="Smirnov S."/>
            <person name="Purcell S."/>
            <person name="Rehman B."/>
            <person name="Elkins T."/>
            <person name="Engels R."/>
            <person name="Wang S."/>
            <person name="Nielsen C.B."/>
            <person name="Butler J."/>
            <person name="Endrizzi M."/>
            <person name="Qui D."/>
            <person name="Ianakiev P."/>
            <person name="Bell-Pedersen D."/>
            <person name="Nelson M.A."/>
            <person name="Werner-Washburne M."/>
            <person name="Selitrennikoff C.P."/>
            <person name="Kinsey J.A."/>
            <person name="Braun E.L."/>
            <person name="Zelter A."/>
            <person name="Schulte U."/>
            <person name="Kothe G.O."/>
            <person name="Jedd G."/>
            <person name="Mewes H.-W."/>
            <person name="Staben C."/>
            <person name="Marcotte E."/>
            <person name="Greenberg D."/>
            <person name="Roy A."/>
            <person name="Foley K."/>
            <person name="Naylor J."/>
            <person name="Stange-Thomann N."/>
            <person name="Barrett R."/>
            <person name="Gnerre S."/>
            <person name="Kamal M."/>
            <person name="Kamvysselis M."/>
            <person name="Mauceli E.W."/>
            <person name="Bielke C."/>
            <person name="Rudd S."/>
            <person name="Frishman D."/>
            <person name="Krystofova S."/>
            <person name="Rasmussen C."/>
            <person name="Metzenberg R.L."/>
            <person name="Perkins D.D."/>
            <person name="Kroken S."/>
            <person name="Cogoni C."/>
            <person name="Macino G."/>
            <person name="Catcheside D.E.A."/>
            <person name="Li W."/>
            <person name="Pratt R.J."/>
            <person name="Osmani S.A."/>
            <person name="DeSouza C.P.C."/>
            <person name="Glass N.L."/>
            <person name="Orbach M.J."/>
            <person name="Berglund J.A."/>
            <person name="Voelker R."/>
            <person name="Yarden O."/>
            <person name="Plamann M."/>
            <person name="Seiler S."/>
            <person name="Dunlap J.C."/>
            <person name="Radford A."/>
            <person name="Aramayo R."/>
            <person name="Natvig D.O."/>
            <person name="Alex L.A."/>
            <person name="Mannhaupt G."/>
            <person name="Ebbole D.J."/>
            <person name="Freitag M."/>
            <person name="Paulsen I."/>
            <person name="Sachs M.S."/>
            <person name="Lander E.S."/>
            <person name="Nusbaum C."/>
            <person name="Birren B.W."/>
        </authorList>
    </citation>
    <scope>NUCLEOTIDE SEQUENCE [LARGE SCALE GENOMIC DNA]</scope>
    <source>
        <strain>ATCC 24698 / 74-OR23-1A / CBS 708.71 / DSM 1257 / FGSC 987</strain>
    </source>
</reference>
<reference key="3">
    <citation type="book" date="2004" name="The Mycota II, Genetics and Biotechnology (2nd edition)">
        <title>Mitochondrial genetics of Neurospora.</title>
        <editorList>
            <person name="Kueck U."/>
        </editorList>
        <authorList>
            <person name="Kennell J.C."/>
            <person name="Collins R.A."/>
            <person name="Griffiths A.J.F."/>
            <person name="Nargang F.E."/>
        </authorList>
    </citation>
    <scope>GENOME REANNOTATION</scope>
    <source>
        <strain>ATCC 24698 / 74-OR23-1A / CBS 708.71 / DSM 1257 / FGSC 987</strain>
    </source>
</reference>
<organism>
    <name type="scientific">Neurospora crassa (strain ATCC 24698 / 74-OR23-1A / CBS 708.71 / DSM 1257 / FGSC 987)</name>
    <dbReference type="NCBI Taxonomy" id="367110"/>
    <lineage>
        <taxon>Eukaryota</taxon>
        <taxon>Fungi</taxon>
        <taxon>Dikarya</taxon>
        <taxon>Ascomycota</taxon>
        <taxon>Pezizomycotina</taxon>
        <taxon>Sordariomycetes</taxon>
        <taxon>Sordariomycetidae</taxon>
        <taxon>Sordariales</taxon>
        <taxon>Sordariaceae</taxon>
        <taxon>Neurospora</taxon>
    </lineage>
</organism>
<keyword id="KW-0472">Membrane</keyword>
<keyword id="KW-0496">Mitochondrion</keyword>
<keyword id="KW-0999">Mitochondrion inner membrane</keyword>
<keyword id="KW-0507">mRNA processing</keyword>
<keyword id="KW-0508">mRNA splicing</keyword>
<keyword id="KW-1185">Reference proteome</keyword>
<keyword id="KW-0694">RNA-binding</keyword>
<keyword id="KW-0812">Transmembrane</keyword>
<keyword id="KW-1133">Transmembrane helix</keyword>
<comment type="function">
    <text evidence="1">Mitochondrial mRNA maturase required for splicing of intron 3 of the cytochrome b (cob) gene, containing its own coding sequence.</text>
</comment>
<comment type="subcellular location">
    <subcellularLocation>
        <location evidence="3">Mitochondrion inner membrane</location>
        <topology evidence="3">Multi-pass membrane protein</topology>
    </subcellularLocation>
</comment>
<comment type="miscellaneous">
    <text>Encoded from partially processed cob mRNA that terminates with the in-frame coding sequence of the third intron.</text>
</comment>
<comment type="similarity">
    <text evidence="3">In the N-terminal section; belongs to the cytochrome b family.</text>
</comment>
<comment type="similarity">
    <text evidence="3">In the C-terminal section; belongs to the LAGLIDADG endonuclease family.</text>
</comment>
<comment type="sequence caution" evidence="3">
    <conflict type="erroneous termination">
        <sequence resource="EMBL-CDS" id="AAA31960"/>
    </conflict>
    <text>Truncated C-terminus.</text>
</comment>
<geneLocation type="mitochondrion"/>
<gene>
    <name type="primary">bI3</name>
    <name type="synonym">cobi3</name>
    <name type="ORF">NCU16015</name>
</gene>
<evidence type="ECO:0000250" key="1"/>
<evidence type="ECO:0000255" key="2">
    <source>
        <dbReference type="PROSITE-ProRule" id="PRU00968"/>
    </source>
</evidence>
<evidence type="ECO:0000305" key="3"/>
<dbReference type="EMBL" id="M37324">
    <property type="protein sequence ID" value="AAA31960.2"/>
    <property type="status" value="ALT_TERM"/>
    <property type="molecule type" value="Genomic_DNA"/>
</dbReference>
<dbReference type="EMBL" id="KC683708">
    <property type="protein sequence ID" value="AGG16003.1"/>
    <property type="molecule type" value="Genomic_DNA"/>
</dbReference>
<dbReference type="PIR" id="A00158">
    <property type="entry name" value="CBNC"/>
</dbReference>
<dbReference type="RefSeq" id="YP_009126715.1">
    <property type="nucleotide sequence ID" value="NC_026614.1"/>
</dbReference>
<dbReference type="SMR" id="P0CY43"/>
<dbReference type="FunCoup" id="P0CY43">
    <property type="interactions" value="68"/>
</dbReference>
<dbReference type="STRING" id="367110.P0CY43"/>
<dbReference type="EnsemblFungi" id="AGG16003">
    <property type="protein sequence ID" value="AGG16003"/>
    <property type="gene ID" value="NCU16015"/>
</dbReference>
<dbReference type="GeneID" id="23681567"/>
<dbReference type="KEGG" id="ncr:NCU16015"/>
<dbReference type="VEuPathDB" id="FungiDB:NCU16015"/>
<dbReference type="InParanoid" id="P0CY43"/>
<dbReference type="OrthoDB" id="5413189at2759"/>
<dbReference type="Proteomes" id="UP000001805">
    <property type="component" value="Mitochondrion"/>
</dbReference>
<dbReference type="GO" id="GO:0016020">
    <property type="term" value="C:membrane"/>
    <property type="evidence" value="ECO:0000318"/>
    <property type="project" value="GO_Central"/>
</dbReference>
<dbReference type="GO" id="GO:0005743">
    <property type="term" value="C:mitochondrial inner membrane"/>
    <property type="evidence" value="ECO:0007669"/>
    <property type="project" value="UniProtKB-SubCell"/>
</dbReference>
<dbReference type="GO" id="GO:0045275">
    <property type="term" value="C:respiratory chain complex III"/>
    <property type="evidence" value="ECO:0000318"/>
    <property type="project" value="GO_Central"/>
</dbReference>
<dbReference type="GO" id="GO:0009055">
    <property type="term" value="F:electron transfer activity"/>
    <property type="evidence" value="ECO:0007669"/>
    <property type="project" value="InterPro"/>
</dbReference>
<dbReference type="GO" id="GO:0004519">
    <property type="term" value="F:endonuclease activity"/>
    <property type="evidence" value="ECO:0007669"/>
    <property type="project" value="InterPro"/>
</dbReference>
<dbReference type="GO" id="GO:0016491">
    <property type="term" value="F:oxidoreductase activity"/>
    <property type="evidence" value="ECO:0007669"/>
    <property type="project" value="InterPro"/>
</dbReference>
<dbReference type="GO" id="GO:0003723">
    <property type="term" value="F:RNA binding"/>
    <property type="evidence" value="ECO:0007669"/>
    <property type="project" value="UniProtKB-KW"/>
</dbReference>
<dbReference type="GO" id="GO:0006122">
    <property type="term" value="P:mitochondrial electron transport, ubiquinol to cytochrome c"/>
    <property type="evidence" value="ECO:0000318"/>
    <property type="project" value="GO_Central"/>
</dbReference>
<dbReference type="GO" id="GO:0006397">
    <property type="term" value="P:mRNA processing"/>
    <property type="evidence" value="ECO:0007669"/>
    <property type="project" value="UniProtKB-KW"/>
</dbReference>
<dbReference type="GO" id="GO:1902600">
    <property type="term" value="P:proton transmembrane transport"/>
    <property type="evidence" value="ECO:0007669"/>
    <property type="project" value="GOC"/>
</dbReference>
<dbReference type="GO" id="GO:0008380">
    <property type="term" value="P:RNA splicing"/>
    <property type="evidence" value="ECO:0007669"/>
    <property type="project" value="UniProtKB-KW"/>
</dbReference>
<dbReference type="CDD" id="cd00284">
    <property type="entry name" value="Cytochrome_b_N"/>
    <property type="match status" value="1"/>
</dbReference>
<dbReference type="FunFam" id="1.20.810.10:FF:000017">
    <property type="entry name" value="Probable intron-encoded endonuclease bI1"/>
    <property type="match status" value="1"/>
</dbReference>
<dbReference type="Gene3D" id="1.20.810.10">
    <property type="entry name" value="Cytochrome Bc1 Complex, Chain C"/>
    <property type="match status" value="1"/>
</dbReference>
<dbReference type="Gene3D" id="3.10.28.10">
    <property type="entry name" value="Homing endonucleases"/>
    <property type="match status" value="2"/>
</dbReference>
<dbReference type="InterPro" id="IPR005797">
    <property type="entry name" value="Cyt_b/b6_N"/>
</dbReference>
<dbReference type="InterPro" id="IPR027387">
    <property type="entry name" value="Cytb/b6-like_sf"/>
</dbReference>
<dbReference type="InterPro" id="IPR048259">
    <property type="entry name" value="Cytochrome_b_N_euk/bac"/>
</dbReference>
<dbReference type="InterPro" id="IPR016174">
    <property type="entry name" value="Di-haem_cyt_TM"/>
</dbReference>
<dbReference type="InterPro" id="IPR027434">
    <property type="entry name" value="Homing_endonucl"/>
</dbReference>
<dbReference type="InterPro" id="IPR004860">
    <property type="entry name" value="LAGLIDADG_dom"/>
</dbReference>
<dbReference type="PANTHER" id="PTHR19271">
    <property type="entry name" value="CYTOCHROME B"/>
    <property type="match status" value="1"/>
</dbReference>
<dbReference type="PANTHER" id="PTHR19271:SF16">
    <property type="entry name" value="CYTOCHROME B"/>
    <property type="match status" value="1"/>
</dbReference>
<dbReference type="Pfam" id="PF00033">
    <property type="entry name" value="Cytochrome_B"/>
    <property type="match status" value="1"/>
</dbReference>
<dbReference type="Pfam" id="PF00961">
    <property type="entry name" value="LAGLIDADG_1"/>
    <property type="match status" value="2"/>
</dbReference>
<dbReference type="SUPFAM" id="SSF55608">
    <property type="entry name" value="Homing endonucleases"/>
    <property type="match status" value="2"/>
</dbReference>
<dbReference type="SUPFAM" id="SSF81342">
    <property type="entry name" value="Transmembrane di-heme cytochromes"/>
    <property type="match status" value="1"/>
</dbReference>
<dbReference type="PROSITE" id="PS51002">
    <property type="entry name" value="CYTB_NTER"/>
    <property type="match status" value="1"/>
</dbReference>